<protein>
    <recommendedName>
        <fullName>Putative membrane-bound redox modulator Alx</fullName>
    </recommendedName>
</protein>
<reference key="1">
    <citation type="journal article" date="2001" name="Nature">
        <title>Complete genome sequence of a multiple drug resistant Salmonella enterica serovar Typhi CT18.</title>
        <authorList>
            <person name="Parkhill J."/>
            <person name="Dougan G."/>
            <person name="James K.D."/>
            <person name="Thomson N.R."/>
            <person name="Pickard D."/>
            <person name="Wain J."/>
            <person name="Churcher C.M."/>
            <person name="Mungall K.L."/>
            <person name="Bentley S.D."/>
            <person name="Holden M.T.G."/>
            <person name="Sebaihia M."/>
            <person name="Baker S."/>
            <person name="Basham D."/>
            <person name="Brooks K."/>
            <person name="Chillingworth T."/>
            <person name="Connerton P."/>
            <person name="Cronin A."/>
            <person name="Davis P."/>
            <person name="Davies R.M."/>
            <person name="Dowd L."/>
            <person name="White N."/>
            <person name="Farrar J."/>
            <person name="Feltwell T."/>
            <person name="Hamlin N."/>
            <person name="Haque A."/>
            <person name="Hien T.T."/>
            <person name="Holroyd S."/>
            <person name="Jagels K."/>
            <person name="Krogh A."/>
            <person name="Larsen T.S."/>
            <person name="Leather S."/>
            <person name="Moule S."/>
            <person name="O'Gaora P."/>
            <person name="Parry C."/>
            <person name="Quail M.A."/>
            <person name="Rutherford K.M."/>
            <person name="Simmonds M."/>
            <person name="Skelton J."/>
            <person name="Stevens K."/>
            <person name="Whitehead S."/>
            <person name="Barrell B.G."/>
        </authorList>
    </citation>
    <scope>NUCLEOTIDE SEQUENCE [LARGE SCALE GENOMIC DNA]</scope>
    <source>
        <strain>CT18</strain>
    </source>
</reference>
<reference key="2">
    <citation type="journal article" date="2003" name="J. Bacteriol.">
        <title>Comparative genomics of Salmonella enterica serovar Typhi strains Ty2 and CT18.</title>
        <authorList>
            <person name="Deng W."/>
            <person name="Liou S.-R."/>
            <person name="Plunkett G. III"/>
            <person name="Mayhew G.F."/>
            <person name="Rose D.J."/>
            <person name="Burland V."/>
            <person name="Kodoyianni V."/>
            <person name="Schwartz D.C."/>
            <person name="Blattner F.R."/>
        </authorList>
    </citation>
    <scope>NUCLEOTIDE SEQUENCE [LARGE SCALE GENOMIC DNA]</scope>
    <source>
        <strain>ATCC 700931 / Ty2</strain>
    </source>
</reference>
<accession>Q8Z3L5</accession>
<comment type="function">
    <text evidence="1">Has been proposed to be a redox modulator.</text>
</comment>
<comment type="subcellular location">
    <subcellularLocation>
        <location evidence="1">Cell inner membrane</location>
        <topology evidence="3">Multi-pass membrane protein</topology>
    </subcellularLocation>
</comment>
<comment type="similarity">
    <text evidence="3">Belongs to the TerC family.</text>
</comment>
<evidence type="ECO:0000250" key="1">
    <source>
        <dbReference type="UniProtKB" id="P42601"/>
    </source>
</evidence>
<evidence type="ECO:0000255" key="2"/>
<evidence type="ECO:0000305" key="3"/>
<organism>
    <name type="scientific">Salmonella typhi</name>
    <dbReference type="NCBI Taxonomy" id="90370"/>
    <lineage>
        <taxon>Bacteria</taxon>
        <taxon>Pseudomonadati</taxon>
        <taxon>Pseudomonadota</taxon>
        <taxon>Gammaproteobacteria</taxon>
        <taxon>Enterobacterales</taxon>
        <taxon>Enterobacteriaceae</taxon>
        <taxon>Salmonella</taxon>
    </lineage>
</organism>
<feature type="chain" id="PRO_0000103414" description="Putative membrane-bound redox modulator Alx">
    <location>
        <begin position="1"/>
        <end position="322"/>
    </location>
</feature>
<feature type="topological domain" description="Periplasmic" evidence="2">
    <location>
        <begin position="1"/>
        <end position="6"/>
    </location>
</feature>
<feature type="transmembrane region" description="Helical" evidence="2">
    <location>
        <begin position="7"/>
        <end position="27"/>
    </location>
</feature>
<feature type="topological domain" description="Cytoplasmic" evidence="2">
    <location>
        <begin position="28"/>
        <end position="43"/>
    </location>
</feature>
<feature type="transmembrane region" description="Helical" evidence="2">
    <location>
        <begin position="44"/>
        <end position="64"/>
    </location>
</feature>
<feature type="topological domain" description="Periplasmic" evidence="2">
    <location>
        <begin position="65"/>
        <end position="89"/>
    </location>
</feature>
<feature type="transmembrane region" description="Helical" evidence="2">
    <location>
        <begin position="90"/>
        <end position="110"/>
    </location>
</feature>
<feature type="topological domain" description="Cytoplasmic" evidence="2">
    <location>
        <begin position="111"/>
        <end position="113"/>
    </location>
</feature>
<feature type="transmembrane region" description="Helical" evidence="2">
    <location>
        <begin position="114"/>
        <end position="134"/>
    </location>
</feature>
<feature type="topological domain" description="Periplasmic" evidence="2">
    <location>
        <position position="135"/>
    </location>
</feature>
<feature type="transmembrane region" description="Helical" evidence="2">
    <location>
        <begin position="136"/>
        <end position="156"/>
    </location>
</feature>
<feature type="topological domain" description="Cytoplasmic" evidence="2">
    <location>
        <begin position="157"/>
        <end position="198"/>
    </location>
</feature>
<feature type="transmembrane region" description="Helical" evidence="2">
    <location>
        <begin position="199"/>
        <end position="219"/>
    </location>
</feature>
<feature type="topological domain" description="Periplasmic" evidence="2">
    <location>
        <begin position="220"/>
        <end position="225"/>
    </location>
</feature>
<feature type="transmembrane region" description="Helical" evidence="2">
    <location>
        <begin position="226"/>
        <end position="246"/>
    </location>
</feature>
<feature type="topological domain" description="Cytoplasmic" evidence="2">
    <location>
        <begin position="247"/>
        <end position="261"/>
    </location>
</feature>
<feature type="transmembrane region" description="Helical" evidence="2">
    <location>
        <begin position="262"/>
        <end position="282"/>
    </location>
</feature>
<feature type="topological domain" description="Periplasmic" evidence="2">
    <location>
        <begin position="283"/>
        <end position="286"/>
    </location>
</feature>
<feature type="transmembrane region" description="Helical" evidence="2">
    <location>
        <begin position="287"/>
        <end position="307"/>
    </location>
</feature>
<feature type="topological domain" description="Cytoplasmic" evidence="2">
    <location>
        <begin position="308"/>
        <end position="321"/>
    </location>
</feature>
<proteinExistence type="inferred from homology"/>
<gene>
    <name type="primary">alx</name>
    <name type="ordered locus">STY3404</name>
    <name type="ordered locus">t3144</name>
</gene>
<name>ALX_SALTI</name>
<dbReference type="EMBL" id="AL513382">
    <property type="protein sequence ID" value="CAD07748.1"/>
    <property type="molecule type" value="Genomic_DNA"/>
</dbReference>
<dbReference type="EMBL" id="AE014613">
    <property type="protein sequence ID" value="AAO70685.1"/>
    <property type="molecule type" value="Genomic_DNA"/>
</dbReference>
<dbReference type="RefSeq" id="NP_457613.1">
    <property type="nucleotide sequence ID" value="NC_003198.1"/>
</dbReference>
<dbReference type="RefSeq" id="WP_001098834.1">
    <property type="nucleotide sequence ID" value="NZ_WSUR01000003.1"/>
</dbReference>
<dbReference type="STRING" id="220341.gene:17587258"/>
<dbReference type="KEGG" id="stt:t3144"/>
<dbReference type="KEGG" id="sty:STY3404"/>
<dbReference type="PATRIC" id="fig|220341.7.peg.3466"/>
<dbReference type="eggNOG" id="COG0861">
    <property type="taxonomic scope" value="Bacteria"/>
</dbReference>
<dbReference type="HOGENOM" id="CLU_045644_1_2_6"/>
<dbReference type="OMA" id="ADHAREY"/>
<dbReference type="OrthoDB" id="9783692at2"/>
<dbReference type="Proteomes" id="UP000000541">
    <property type="component" value="Chromosome"/>
</dbReference>
<dbReference type="Proteomes" id="UP000002670">
    <property type="component" value="Chromosome"/>
</dbReference>
<dbReference type="GO" id="GO:0005886">
    <property type="term" value="C:plasma membrane"/>
    <property type="evidence" value="ECO:0007669"/>
    <property type="project" value="UniProtKB-SubCell"/>
</dbReference>
<dbReference type="InterPro" id="IPR005496">
    <property type="entry name" value="Integral_membrane_TerC"/>
</dbReference>
<dbReference type="InterPro" id="IPR022369">
    <property type="entry name" value="Integral_membrane_TerC_rswitch"/>
</dbReference>
<dbReference type="NCBIfam" id="TIGR03718">
    <property type="entry name" value="R_switched_Alx"/>
    <property type="match status" value="1"/>
</dbReference>
<dbReference type="PANTHER" id="PTHR30238">
    <property type="entry name" value="MEMBRANE BOUND PREDICTED REDOX MODULATOR"/>
    <property type="match status" value="1"/>
</dbReference>
<dbReference type="PANTHER" id="PTHR30238:SF0">
    <property type="entry name" value="THYLAKOID MEMBRANE PROTEIN TERC, CHLOROPLASTIC"/>
    <property type="match status" value="1"/>
</dbReference>
<dbReference type="Pfam" id="PF03741">
    <property type="entry name" value="TerC"/>
    <property type="match status" value="1"/>
</dbReference>
<sequence>MNTVGTPLLWGGFAVVVVIMLSIDLLLQGRRGAHAMSMKQAAGWSILWVTLSLLFNAAFWWYLAETQGREVADPQALAFLTGYLIEKSLAVDNVFVWLMLFSYFSVPPALQRRVLVYGVLGAIVLRTIMIFAGTWLITQFEWLLYVFGAFLLFTGVKMALAKEDESGIGEKPMVRWLRGHLRMTDTIENEHFFVRKNGLLYATPLLLVLIMVEFSDVIFAVDSIPAIFAVTTDPFIVLTSNLFAILGLRAMYFLLSGVAERFSMLKYGLAVILVFIGIKMLIVDFYHIPIAISLGVVFGILTITLVINTWVNHQRDKKLRAQ</sequence>
<keyword id="KW-0997">Cell inner membrane</keyword>
<keyword id="KW-1003">Cell membrane</keyword>
<keyword id="KW-0472">Membrane</keyword>
<keyword id="KW-0812">Transmembrane</keyword>
<keyword id="KW-1133">Transmembrane helix</keyword>